<dbReference type="EC" id="4.6.1.-" evidence="5"/>
<dbReference type="EMBL" id="KM884812">
    <property type="protein sequence ID" value="AJV88487.1"/>
    <property type="molecule type" value="mRNA"/>
</dbReference>
<dbReference type="SMR" id="A0A0D4WTV1"/>
<dbReference type="SwissLipids" id="SLP:000001961"/>
<dbReference type="GO" id="GO:0005576">
    <property type="term" value="C:extracellular region"/>
    <property type="evidence" value="ECO:0007669"/>
    <property type="project" value="UniProtKB-SubCell"/>
</dbReference>
<dbReference type="GO" id="GO:0016829">
    <property type="term" value="F:lyase activity"/>
    <property type="evidence" value="ECO:0007669"/>
    <property type="project" value="UniProtKB-KW"/>
</dbReference>
<dbReference type="GO" id="GO:0046872">
    <property type="term" value="F:metal ion binding"/>
    <property type="evidence" value="ECO:0007669"/>
    <property type="project" value="UniProtKB-KW"/>
</dbReference>
<dbReference type="GO" id="GO:0008081">
    <property type="term" value="F:phosphoric diester hydrolase activity"/>
    <property type="evidence" value="ECO:0007669"/>
    <property type="project" value="InterPro"/>
</dbReference>
<dbReference type="GO" id="GO:0090729">
    <property type="term" value="F:toxin activity"/>
    <property type="evidence" value="ECO:0007669"/>
    <property type="project" value="UniProtKB-KW"/>
</dbReference>
<dbReference type="GO" id="GO:0031640">
    <property type="term" value="P:killing of cells of another organism"/>
    <property type="evidence" value="ECO:0007669"/>
    <property type="project" value="UniProtKB-KW"/>
</dbReference>
<dbReference type="GO" id="GO:0016042">
    <property type="term" value="P:lipid catabolic process"/>
    <property type="evidence" value="ECO:0007669"/>
    <property type="project" value="UniProtKB-KW"/>
</dbReference>
<dbReference type="CDD" id="cd08576">
    <property type="entry name" value="GDPD_like_SMaseD_PLD"/>
    <property type="match status" value="1"/>
</dbReference>
<dbReference type="Gene3D" id="3.20.20.190">
    <property type="entry name" value="Phosphatidylinositol (PI) phosphodiesterase"/>
    <property type="match status" value="1"/>
</dbReference>
<dbReference type="InterPro" id="IPR017946">
    <property type="entry name" value="PLC-like_Pdiesterase_TIM-brl"/>
</dbReference>
<dbReference type="SUPFAM" id="SSF51695">
    <property type="entry name" value="PLC-like phosphodiesterases"/>
    <property type="match status" value="1"/>
</dbReference>
<feature type="signal peptide" evidence="7">
    <location>
        <begin position="1" status="less than"/>
        <end position="2"/>
    </location>
</feature>
<feature type="propeptide" id="PRO_0000447763" evidence="1">
    <location>
        <begin position="3"/>
        <end position="11"/>
    </location>
</feature>
<feature type="chain" id="PRO_0000447764" description="Dermonecrotic toxin LarSicTox-betaID1">
    <location>
        <begin position="11"/>
        <end position="289"/>
    </location>
</feature>
<feature type="active site" evidence="4">
    <location>
        <position position="22"/>
    </location>
</feature>
<feature type="active site" description="Nucleophile" evidence="4">
    <location>
        <position position="58"/>
    </location>
</feature>
<feature type="binding site" evidence="4">
    <location>
        <position position="42"/>
    </location>
    <ligand>
        <name>Mg(2+)</name>
        <dbReference type="ChEBI" id="CHEBI:18420"/>
    </ligand>
</feature>
<feature type="binding site" evidence="4">
    <location>
        <position position="44"/>
    </location>
    <ligand>
        <name>Mg(2+)</name>
        <dbReference type="ChEBI" id="CHEBI:18420"/>
    </ligand>
</feature>
<feature type="binding site" evidence="4">
    <location>
        <position position="102"/>
    </location>
    <ligand>
        <name>Mg(2+)</name>
        <dbReference type="ChEBI" id="CHEBI:18420"/>
    </ligand>
</feature>
<feature type="disulfide bond" evidence="2">
    <location>
        <begin position="62"/>
        <end position="68"/>
    </location>
</feature>
<feature type="disulfide bond" evidence="2">
    <location>
        <begin position="64"/>
        <end position="207"/>
    </location>
</feature>
<feature type="non-terminal residue" evidence="8">
    <location>
        <position position="1"/>
    </location>
</feature>
<organism>
    <name type="scientific">Loxosceles arizonica</name>
    <name type="common">Arizona brown spider</name>
    <dbReference type="NCBI Taxonomy" id="196454"/>
    <lineage>
        <taxon>Eukaryota</taxon>
        <taxon>Metazoa</taxon>
        <taxon>Ecdysozoa</taxon>
        <taxon>Arthropoda</taxon>
        <taxon>Chelicerata</taxon>
        <taxon>Arachnida</taxon>
        <taxon>Araneae</taxon>
        <taxon>Araneomorphae</taxon>
        <taxon>Haplogynae</taxon>
        <taxon>Scytodoidea</taxon>
        <taxon>Sicariidae</taxon>
        <taxon>Loxosceles</taxon>
    </lineage>
</organism>
<accession>A0A0D4WTV1</accession>
<proteinExistence type="evidence at protein level"/>
<evidence type="ECO:0000250" key="1">
    <source>
        <dbReference type="UniProtKB" id="K9USW8"/>
    </source>
</evidence>
<evidence type="ECO:0000250" key="2">
    <source>
        <dbReference type="UniProtKB" id="P0CE80"/>
    </source>
</evidence>
<evidence type="ECO:0000250" key="3">
    <source>
        <dbReference type="UniProtKB" id="Q4ZFU2"/>
    </source>
</evidence>
<evidence type="ECO:0000250" key="4">
    <source>
        <dbReference type="UniProtKB" id="Q8I914"/>
    </source>
</evidence>
<evidence type="ECO:0000269" key="5">
    <source>
    </source>
</evidence>
<evidence type="ECO:0000303" key="6">
    <source>
    </source>
</evidence>
<evidence type="ECO:0000305" key="7"/>
<evidence type="ECO:0000305" key="8">
    <source>
    </source>
</evidence>
<sequence>EGAEQDGSERTDGGRPIWNIAHMVNNKQAIDKYLDKGANSVESDVSFDSDGKPEKMLHGIPCDCGRKCLNQMSFTDYLDYMRQLTTPGDPKFRENLILIMLDLKLKSVAANLAYSSGQEVALQMLNTYWKRGESGARAYIVLSIPTIKRVTFVRGFYDKLHSEGFDQYREKVGVDFSGNEDLDETGRILSSQNILDHIWQSDGITNCIFRVMTRLKKAINKRDSNGYMVKVYYWSVDKYTIMRKTLRAGADGMITNFPDRLVSVLNEREFSGKFRLATYDDNPWERYKA</sequence>
<protein>
    <recommendedName>
        <fullName evidence="6">Dermonecrotic toxin LarSicTox-betaID1</fullName>
        <ecNumber evidence="5">4.6.1.-</ecNumber>
    </recommendedName>
    <alternativeName>
        <fullName>Phospholipase D</fullName>
        <shortName>PLD</shortName>
    </alternativeName>
    <alternativeName>
        <fullName>Sphingomyelin phosphodiesterase D</fullName>
        <shortName>SMD</shortName>
        <shortName>SMase D</shortName>
        <shortName>Sphingomyelinase D</shortName>
    </alternativeName>
</protein>
<reference key="1">
    <citation type="journal article" date="2015" name="J. Biol. Chem.">
        <title>Variable substrate preference among phospholipase D toxins from Sicariid spiders.</title>
        <authorList>
            <person name="Lajoie D.M."/>
            <person name="Roberts S.A."/>
            <person name="Zobel-Thropp P.A."/>
            <person name="Delahaye J.L."/>
            <person name="Bandarian V."/>
            <person name="Binford G.J."/>
            <person name="Cordes M.H."/>
        </authorList>
    </citation>
    <scope>NUCLEOTIDE SEQUENCE [MRNA]</scope>
    <scope>CATALYTIC ACTIVITY</scope>
    <scope>FUNCTION</scope>
    <source>
        <tissue>Venom gland</tissue>
    </source>
</reference>
<comment type="function">
    <text evidence="2 5">Dermonecrotic toxins cleave the phosphodiester linkage between the phosphate and headgroup of certain phospholipids (sphingolipid and lysolipid substrates), forming an alcohol (often choline) and a cyclic phosphate (PubMed:25752604). This toxin acts on sphingomyelin (SM) and on ceramide phosphoethanolamine (CPE) with high activity (PubMed:25752604). It also acts on lysophosphatidylcholine (LPC) and on lysophosphatidylethanolamine (LPE) with moderate activity (PubMed:25752604). It is not active on lysophosphatidylserine (LPS), and lysophosphatidylglycerol (LPG) (PubMed:25752604). It acts by transphosphatidylation, releasing exclusively cyclic phosphate as second products (PubMed:25752604). It is not surprising that spider toxins have affinity for ethanolamine-containing sphingolipids since they are common in insect prey (PubMed:25752604). On mammals, induces dermonecrosis, hemolysis, increased vascular permeability, edema, inflammatory response, and platelet aggregation (By similarity).</text>
</comment>
<comment type="catalytic activity">
    <reaction evidence="5">
        <text>an N-(acyl)-sphingosylphosphocholine = an N-(acyl)-sphingosyl-1,3-cyclic phosphate + choline</text>
        <dbReference type="Rhea" id="RHEA:60652"/>
        <dbReference type="ChEBI" id="CHEBI:15354"/>
        <dbReference type="ChEBI" id="CHEBI:64583"/>
        <dbReference type="ChEBI" id="CHEBI:143892"/>
    </reaction>
</comment>
<comment type="catalytic activity">
    <reaction evidence="5">
        <text>N-hexanoyl-sphing-4-enine-1-phosphocholine = N-(hexanoyl)-sphing-4-enine-1,3-cyclic phosphate + choline</text>
        <dbReference type="Rhea" id="RHEA:60620"/>
        <dbReference type="ChEBI" id="CHEBI:15354"/>
        <dbReference type="ChEBI" id="CHEBI:78254"/>
        <dbReference type="ChEBI" id="CHEBI:143883"/>
    </reaction>
</comment>
<comment type="catalytic activity">
    <reaction evidence="5">
        <text>N-(dodecanoyl)-sphing-4-enine-1-phosphocholine = N-dodecanoyl-sphing-4-enine-1,3-cyclic phosphate + choline</text>
        <dbReference type="Rhea" id="RHEA:60636"/>
        <dbReference type="ChEBI" id="CHEBI:15354"/>
        <dbReference type="ChEBI" id="CHEBI:137334"/>
        <dbReference type="ChEBI" id="CHEBI:143884"/>
    </reaction>
</comment>
<comment type="catalytic activity">
    <reaction evidence="5">
        <text>an N-(acyl)-sphingosylphosphoethanolamine = an N-(acyl)-sphingosyl-1,3-cyclic phosphate + ethanolamine</text>
        <dbReference type="Rhea" id="RHEA:60648"/>
        <dbReference type="ChEBI" id="CHEBI:57603"/>
        <dbReference type="ChEBI" id="CHEBI:143891"/>
        <dbReference type="ChEBI" id="CHEBI:143892"/>
    </reaction>
</comment>
<comment type="catalytic activity">
    <reaction evidence="5">
        <text>N-dodecanoyl-heptadecasphing-4-enine-1-phosphoethanolamine = N-dodecanoyl-heptadecasphing-4-enine-1,3-cyclic phosphate + ethanolamine</text>
        <dbReference type="Rhea" id="RHEA:60616"/>
        <dbReference type="ChEBI" id="CHEBI:57603"/>
        <dbReference type="ChEBI" id="CHEBI:143864"/>
        <dbReference type="ChEBI" id="CHEBI:143865"/>
    </reaction>
</comment>
<comment type="catalytic activity">
    <reaction evidence="5">
        <text>a 1-acyl-sn-glycero-3-phosphocholine = a 1-acyl-sn-glycero-2,3-cyclic phosphate + choline</text>
        <dbReference type="Rhea" id="RHEA:60700"/>
        <dbReference type="ChEBI" id="CHEBI:15354"/>
        <dbReference type="ChEBI" id="CHEBI:58168"/>
        <dbReference type="ChEBI" id="CHEBI:143947"/>
    </reaction>
</comment>
<comment type="catalytic activity">
    <reaction evidence="5">
        <text>1-tetradecanoyl-sn-glycero-3-phosphocholine = 1-tetradecanoyl-sn-glycero-2,3-cyclic phosphate + choline</text>
        <dbReference type="Rhea" id="RHEA:60604"/>
        <dbReference type="ChEBI" id="CHEBI:15354"/>
        <dbReference type="ChEBI" id="CHEBI:64489"/>
        <dbReference type="ChEBI" id="CHEBI:143882"/>
    </reaction>
</comment>
<comment type="catalytic activity">
    <reaction evidence="5">
        <text>1-octanoyl-sn-glycero-3-phosphocholine = 1-octanoyl-sn-glycero-2,3-cyclic phosphate + choline</text>
        <dbReference type="Rhea" id="RHEA:60612"/>
        <dbReference type="ChEBI" id="CHEBI:15354"/>
        <dbReference type="ChEBI" id="CHEBI:143866"/>
        <dbReference type="ChEBI" id="CHEBI:143876"/>
    </reaction>
</comment>
<comment type="catalytic activity">
    <reaction evidence="5">
        <text>a 1-acyl-sn-glycero-3-phosphoethanolamine = a 1-acyl-sn-glycero-2,3-cyclic phosphate + ethanolamine</text>
        <dbReference type="Rhea" id="RHEA:60704"/>
        <dbReference type="ChEBI" id="CHEBI:57603"/>
        <dbReference type="ChEBI" id="CHEBI:64381"/>
        <dbReference type="ChEBI" id="CHEBI:143947"/>
    </reaction>
</comment>
<comment type="catalytic activity">
    <reaction evidence="5">
        <text>1-tetradecanoyl-sn-glycero-3-phosphoethanolamine = 1-tetradecanoyl-sn-glycero-2,3-cyclic phosphate + ethanolamine</text>
        <dbReference type="Rhea" id="RHEA:60608"/>
        <dbReference type="ChEBI" id="CHEBI:57603"/>
        <dbReference type="ChEBI" id="CHEBI:84299"/>
        <dbReference type="ChEBI" id="CHEBI:143882"/>
    </reaction>
</comment>
<comment type="cofactor">
    <cofactor evidence="4">
        <name>Mg(2+)</name>
        <dbReference type="ChEBI" id="CHEBI:18420"/>
    </cofactor>
    <text evidence="4">Binds 1 Mg(2+) ion per subunit.</text>
</comment>
<comment type="subcellular location">
    <subcellularLocation>
        <location evidence="8">Secreted</location>
    </subcellularLocation>
</comment>
<comment type="tissue specificity">
    <text evidence="8">Expressed by the venom gland.</text>
</comment>
<comment type="similarity">
    <text evidence="7">Belongs to the arthropod phospholipase D family. Class II subfamily.</text>
</comment>
<comment type="caution">
    <text evidence="3 5">The most common activity assay for dermonecrotic toxins detects enzymatic activity by monitoring choline release from substrate. Liberation of choline from sphingomyelin (SM) or lysophosphatidylcholine (LPC) is commonly assumed to result from substrate hydrolysis, giving either ceramide-1-phosphate (C1P) or lysophosphatidic acid (LPA), respectively, as a second product. However, two studies from Lajoie and colleagues (2013 and 2015) report the observation of exclusive formation of cyclic phosphate products as second products, resulting from intramolecular transphosphatidylation. Cyclic phosphates have vastly different biological properties from their monoester counterparts, and they may be relevant to the pathology of brown spider envenomation.</text>
</comment>
<keyword id="KW-0204">Cytolysis</keyword>
<keyword id="KW-1061">Dermonecrotic toxin</keyword>
<keyword id="KW-1015">Disulfide bond</keyword>
<keyword id="KW-0354">Hemolysis</keyword>
<keyword id="KW-0442">Lipid degradation</keyword>
<keyword id="KW-0443">Lipid metabolism</keyword>
<keyword id="KW-0456">Lyase</keyword>
<keyword id="KW-0460">Magnesium</keyword>
<keyword id="KW-0479">Metal-binding</keyword>
<keyword id="KW-0964">Secreted</keyword>
<keyword id="KW-0732">Signal</keyword>
<keyword id="KW-0800">Toxin</keyword>
<keyword id="KW-0865">Zymogen</keyword>
<name>B1D1_LOXAR</name>